<comment type="function">
    <text evidence="4">Required for normal inner ear hair cell function and hearing.</text>
</comment>
<comment type="subcellular location">
    <subcellularLocation>
        <location evidence="1">Membrane</location>
        <topology evidence="1">Single-pass type I membrane protein</topology>
    </subcellularLocation>
</comment>
<comment type="disruption phenotype">
    <text evidence="4">Morpholino knockdown of the protein causes delayed sound-induced startle response and circular swimming behavior. Morphants show significantly reduced extracellular receptor potentials and impaired mechanoelectrical transduction in hair cells of inner ear relative to controls.</text>
</comment>
<comment type="similarity">
    <text evidence="5">Belongs to the TMEM132 family.</text>
</comment>
<dbReference type="EMBL" id="JX995104">
    <property type="protein sequence ID" value="AGC65591.1"/>
    <property type="molecule type" value="mRNA"/>
</dbReference>
<dbReference type="EMBL" id="CR388016">
    <property type="status" value="NOT_ANNOTATED_CDS"/>
    <property type="molecule type" value="Genomic_DNA"/>
</dbReference>
<dbReference type="EMBL" id="FP067411">
    <property type="status" value="NOT_ANNOTATED_CDS"/>
    <property type="molecule type" value="Genomic_DNA"/>
</dbReference>
<dbReference type="EMBL" id="CU929235">
    <property type="status" value="NOT_ANNOTATED_CDS"/>
    <property type="molecule type" value="Genomic_DNA"/>
</dbReference>
<dbReference type="RefSeq" id="NP_001289163.1">
    <property type="nucleotide sequence ID" value="NM_001302234.1"/>
</dbReference>
<dbReference type="SMR" id="L7VG99"/>
<dbReference type="FunCoup" id="L7VG99">
    <property type="interactions" value="1127"/>
</dbReference>
<dbReference type="STRING" id="7955.ENSDARP00000107971"/>
<dbReference type="GlyCosmos" id="L7VG99">
    <property type="glycosylation" value="4 sites, No reported glycans"/>
</dbReference>
<dbReference type="PaxDb" id="7955-ENSDARP00000107971"/>
<dbReference type="Ensembl" id="ENSDART00000130565">
    <property type="protein sequence ID" value="ENSDARP00000107971"/>
    <property type="gene ID" value="ENSDARG00000090830"/>
</dbReference>
<dbReference type="GeneID" id="564044"/>
<dbReference type="KEGG" id="dre:564044"/>
<dbReference type="AGR" id="ZFIN:ZDB-GENE-120926-3"/>
<dbReference type="CTD" id="124842"/>
<dbReference type="ZFIN" id="ZDB-GENE-120926-3">
    <property type="gene designation" value="tmem132e"/>
</dbReference>
<dbReference type="eggNOG" id="KOG4789">
    <property type="taxonomic scope" value="Eukaryota"/>
</dbReference>
<dbReference type="HOGENOM" id="CLU_009871_0_0_1"/>
<dbReference type="InParanoid" id="L7VG99"/>
<dbReference type="OMA" id="GEMVPRR"/>
<dbReference type="OrthoDB" id="10026202at2759"/>
<dbReference type="PRO" id="PR:L7VG99"/>
<dbReference type="Proteomes" id="UP000000437">
    <property type="component" value="Chromosome 5"/>
</dbReference>
<dbReference type="Bgee" id="ENSDARG00000090830">
    <property type="expression patterns" value="Expressed in retina and 20 other cell types or tissues"/>
</dbReference>
<dbReference type="ExpressionAtlas" id="L7VG99">
    <property type="expression patterns" value="baseline"/>
</dbReference>
<dbReference type="GO" id="GO:0016020">
    <property type="term" value="C:membrane"/>
    <property type="evidence" value="ECO:0007669"/>
    <property type="project" value="UniProtKB-SubCell"/>
</dbReference>
<dbReference type="GO" id="GO:0060117">
    <property type="term" value="P:auditory receptor cell development"/>
    <property type="evidence" value="ECO:0000315"/>
    <property type="project" value="ZFIN"/>
</dbReference>
<dbReference type="GO" id="GO:0050910">
    <property type="term" value="P:detection of mechanical stimulus involved in sensory perception of sound"/>
    <property type="evidence" value="ECO:0000315"/>
    <property type="project" value="ZFIN"/>
</dbReference>
<dbReference type="GO" id="GO:0035677">
    <property type="term" value="P:posterior lateral line neuromast hair cell development"/>
    <property type="evidence" value="ECO:0000315"/>
    <property type="project" value="ZFIN"/>
</dbReference>
<dbReference type="InterPro" id="IPR055422">
    <property type="entry name" value="Ig_TMEM132_2nd"/>
</dbReference>
<dbReference type="InterPro" id="IPR055423">
    <property type="entry name" value="Ig_TMEM132_5th"/>
</dbReference>
<dbReference type="InterPro" id="IPR055424">
    <property type="entry name" value="Ig_TMEM132_6th"/>
</dbReference>
<dbReference type="InterPro" id="IPR026307">
    <property type="entry name" value="TMEM132"/>
</dbReference>
<dbReference type="InterPro" id="IPR055421">
    <property type="entry name" value="TMEM132_3rd"/>
</dbReference>
<dbReference type="InterPro" id="IPR031436">
    <property type="entry name" value="TMEM132_C"/>
</dbReference>
<dbReference type="InterPro" id="IPR031437">
    <property type="entry name" value="TMEM132_M"/>
</dbReference>
<dbReference type="InterPro" id="IPR031435">
    <property type="entry name" value="TMEM132_N"/>
</dbReference>
<dbReference type="PANTHER" id="PTHR13388">
    <property type="entry name" value="DETONATOR, ISOFORM E"/>
    <property type="match status" value="1"/>
</dbReference>
<dbReference type="PANTHER" id="PTHR13388:SF7">
    <property type="entry name" value="TRANSMEMBRANE PROTEIN 132E"/>
    <property type="match status" value="1"/>
</dbReference>
<dbReference type="Pfam" id="PF23481">
    <property type="entry name" value="Ig_TMEM132_2nd"/>
    <property type="match status" value="1"/>
</dbReference>
<dbReference type="Pfam" id="PF16070">
    <property type="entry name" value="Ig_TMEM132_4th"/>
    <property type="match status" value="1"/>
</dbReference>
<dbReference type="Pfam" id="PF23486">
    <property type="entry name" value="Ig_TMEM132_5th"/>
    <property type="match status" value="1"/>
</dbReference>
<dbReference type="Pfam" id="PF23487">
    <property type="entry name" value="Ig_TMEM132_6th"/>
    <property type="match status" value="1"/>
</dbReference>
<dbReference type="Pfam" id="PF23039">
    <property type="entry name" value="TMEM132_3rd"/>
    <property type="match status" value="1"/>
</dbReference>
<dbReference type="Pfam" id="PF15706">
    <property type="entry name" value="TMEM132_C"/>
    <property type="match status" value="1"/>
</dbReference>
<dbReference type="Pfam" id="PF15705">
    <property type="entry name" value="TMEM132_N"/>
    <property type="match status" value="1"/>
</dbReference>
<reference key="1">
    <citation type="journal article" date="2015" name="Hum. Mutat.">
        <title>Whole-exome sequencing identifies a variant in TMEM132E causing autosomal-recessive nonsyndromic hearing loss DFNB99.</title>
        <authorList>
            <person name="Li J."/>
            <person name="Zhao X."/>
            <person name="Xin Q."/>
            <person name="Shan S."/>
            <person name="Jiang B."/>
            <person name="Jin Y."/>
            <person name="Yuan H."/>
            <person name="Dai P."/>
            <person name="Xiao R."/>
            <person name="Zhang Q."/>
            <person name="Xiao J."/>
            <person name="Shao C."/>
            <person name="Gong Y."/>
            <person name="Liu Q."/>
        </authorList>
    </citation>
    <scope>NUCLEOTIDE SEQUENCE [MRNA]</scope>
    <scope>FUNCTION</scope>
    <scope>DISRUPTION PHENOTYPE</scope>
</reference>
<reference key="2">
    <citation type="journal article" date="2013" name="Nature">
        <title>The zebrafish reference genome sequence and its relationship to the human genome.</title>
        <authorList>
            <person name="Howe K."/>
            <person name="Clark M.D."/>
            <person name="Torroja C.F."/>
            <person name="Torrance J."/>
            <person name="Berthelot C."/>
            <person name="Muffato M."/>
            <person name="Collins J.E."/>
            <person name="Humphray S."/>
            <person name="McLaren K."/>
            <person name="Matthews L."/>
            <person name="McLaren S."/>
            <person name="Sealy I."/>
            <person name="Caccamo M."/>
            <person name="Churcher C."/>
            <person name="Scott C."/>
            <person name="Barrett J.C."/>
            <person name="Koch R."/>
            <person name="Rauch G.J."/>
            <person name="White S."/>
            <person name="Chow W."/>
            <person name="Kilian B."/>
            <person name="Quintais L.T."/>
            <person name="Guerra-Assuncao J.A."/>
            <person name="Zhou Y."/>
            <person name="Gu Y."/>
            <person name="Yen J."/>
            <person name="Vogel J.H."/>
            <person name="Eyre T."/>
            <person name="Redmond S."/>
            <person name="Banerjee R."/>
            <person name="Chi J."/>
            <person name="Fu B."/>
            <person name="Langley E."/>
            <person name="Maguire S.F."/>
            <person name="Laird G.K."/>
            <person name="Lloyd D."/>
            <person name="Kenyon E."/>
            <person name="Donaldson S."/>
            <person name="Sehra H."/>
            <person name="Almeida-King J."/>
            <person name="Loveland J."/>
            <person name="Trevanion S."/>
            <person name="Jones M."/>
            <person name="Quail M."/>
            <person name="Willey D."/>
            <person name="Hunt A."/>
            <person name="Burton J."/>
            <person name="Sims S."/>
            <person name="McLay K."/>
            <person name="Plumb B."/>
            <person name="Davis J."/>
            <person name="Clee C."/>
            <person name="Oliver K."/>
            <person name="Clark R."/>
            <person name="Riddle C."/>
            <person name="Elliot D."/>
            <person name="Threadgold G."/>
            <person name="Harden G."/>
            <person name="Ware D."/>
            <person name="Begum S."/>
            <person name="Mortimore B."/>
            <person name="Kerry G."/>
            <person name="Heath P."/>
            <person name="Phillimore B."/>
            <person name="Tracey A."/>
            <person name="Corby N."/>
            <person name="Dunn M."/>
            <person name="Johnson C."/>
            <person name="Wood J."/>
            <person name="Clark S."/>
            <person name="Pelan S."/>
            <person name="Griffiths G."/>
            <person name="Smith M."/>
            <person name="Glithero R."/>
            <person name="Howden P."/>
            <person name="Barker N."/>
            <person name="Lloyd C."/>
            <person name="Stevens C."/>
            <person name="Harley J."/>
            <person name="Holt K."/>
            <person name="Panagiotidis G."/>
            <person name="Lovell J."/>
            <person name="Beasley H."/>
            <person name="Henderson C."/>
            <person name="Gordon D."/>
            <person name="Auger K."/>
            <person name="Wright D."/>
            <person name="Collins J."/>
            <person name="Raisen C."/>
            <person name="Dyer L."/>
            <person name="Leung K."/>
            <person name="Robertson L."/>
            <person name="Ambridge K."/>
            <person name="Leongamornlert D."/>
            <person name="McGuire S."/>
            <person name="Gilderthorp R."/>
            <person name="Griffiths C."/>
            <person name="Manthravadi D."/>
            <person name="Nichol S."/>
            <person name="Barker G."/>
            <person name="Whitehead S."/>
            <person name="Kay M."/>
            <person name="Brown J."/>
            <person name="Murnane C."/>
            <person name="Gray E."/>
            <person name="Humphries M."/>
            <person name="Sycamore N."/>
            <person name="Barker D."/>
            <person name="Saunders D."/>
            <person name="Wallis J."/>
            <person name="Babbage A."/>
            <person name="Hammond S."/>
            <person name="Mashreghi-Mohammadi M."/>
            <person name="Barr L."/>
            <person name="Martin S."/>
            <person name="Wray P."/>
            <person name="Ellington A."/>
            <person name="Matthews N."/>
            <person name="Ellwood M."/>
            <person name="Woodmansey R."/>
            <person name="Clark G."/>
            <person name="Cooper J."/>
            <person name="Tromans A."/>
            <person name="Grafham D."/>
            <person name="Skuce C."/>
            <person name="Pandian R."/>
            <person name="Andrews R."/>
            <person name="Harrison E."/>
            <person name="Kimberley A."/>
            <person name="Garnett J."/>
            <person name="Fosker N."/>
            <person name="Hall R."/>
            <person name="Garner P."/>
            <person name="Kelly D."/>
            <person name="Bird C."/>
            <person name="Palmer S."/>
            <person name="Gehring I."/>
            <person name="Berger A."/>
            <person name="Dooley C.M."/>
            <person name="Ersan-Urun Z."/>
            <person name="Eser C."/>
            <person name="Geiger H."/>
            <person name="Geisler M."/>
            <person name="Karotki L."/>
            <person name="Kirn A."/>
            <person name="Konantz J."/>
            <person name="Konantz M."/>
            <person name="Oberlander M."/>
            <person name="Rudolph-Geiger S."/>
            <person name="Teucke M."/>
            <person name="Lanz C."/>
            <person name="Raddatz G."/>
            <person name="Osoegawa K."/>
            <person name="Zhu B."/>
            <person name="Rapp A."/>
            <person name="Widaa S."/>
            <person name="Langford C."/>
            <person name="Yang F."/>
            <person name="Schuster S.C."/>
            <person name="Carter N.P."/>
            <person name="Harrow J."/>
            <person name="Ning Z."/>
            <person name="Herrero J."/>
            <person name="Searle S.M."/>
            <person name="Enright A."/>
            <person name="Geisler R."/>
            <person name="Plasterk R.H."/>
            <person name="Lee C."/>
            <person name="Westerfield M."/>
            <person name="de Jong P.J."/>
            <person name="Zon L.I."/>
            <person name="Postlethwait J.H."/>
            <person name="Nusslein-Volhard C."/>
            <person name="Hubbard T.J."/>
            <person name="Roest Crollius H."/>
            <person name="Rogers J."/>
            <person name="Stemple D.L."/>
        </authorList>
    </citation>
    <scope>NUCLEOTIDE SEQUENCE [LARGE SCALE GENOMIC DNA]</scope>
    <source>
        <strain>Tuebingen</strain>
    </source>
</reference>
<evidence type="ECO:0000255" key="1"/>
<evidence type="ECO:0000255" key="2">
    <source>
        <dbReference type="PROSITE-ProRule" id="PRU00498"/>
    </source>
</evidence>
<evidence type="ECO:0000256" key="3">
    <source>
        <dbReference type="SAM" id="MobiDB-lite"/>
    </source>
</evidence>
<evidence type="ECO:0000269" key="4">
    <source>
    </source>
</evidence>
<evidence type="ECO:0000305" key="5"/>
<feature type="signal peptide" evidence="1">
    <location>
        <begin position="1"/>
        <end position="33"/>
    </location>
</feature>
<feature type="chain" id="PRO_0000433801" description="Transmembrane protein 132E" evidence="1">
    <location>
        <begin position="34"/>
        <end position="1073"/>
    </location>
</feature>
<feature type="topological domain" description="Extracellular" evidence="5">
    <location>
        <begin position="34"/>
        <end position="899"/>
    </location>
</feature>
<feature type="transmembrane region" description="Helical" evidence="1">
    <location>
        <begin position="900"/>
        <end position="920"/>
    </location>
</feature>
<feature type="topological domain" description="Cytoplasmic" evidence="5">
    <location>
        <begin position="921"/>
        <end position="1073"/>
    </location>
</feature>
<feature type="region of interest" description="Disordered" evidence="3">
    <location>
        <begin position="246"/>
        <end position="270"/>
    </location>
</feature>
<feature type="region of interest" description="Disordered" evidence="3">
    <location>
        <begin position="952"/>
        <end position="1024"/>
    </location>
</feature>
<feature type="compositionally biased region" description="Polar residues" evidence="3">
    <location>
        <begin position="952"/>
        <end position="970"/>
    </location>
</feature>
<feature type="compositionally biased region" description="Low complexity" evidence="3">
    <location>
        <begin position="982"/>
        <end position="994"/>
    </location>
</feature>
<feature type="glycosylation site" description="N-linked (GlcNAc...) asparagine" evidence="2">
    <location>
        <position position="102"/>
    </location>
</feature>
<feature type="glycosylation site" description="N-linked (GlcNAc...) asparagine" evidence="2">
    <location>
        <position position="324"/>
    </location>
</feature>
<feature type="glycosylation site" description="N-linked (GlcNAc...) asparagine" evidence="2">
    <location>
        <position position="396"/>
    </location>
</feature>
<feature type="glycosylation site" description="N-linked (GlcNAc...) asparagine" evidence="2">
    <location>
        <position position="746"/>
    </location>
</feature>
<organism>
    <name type="scientific">Danio rerio</name>
    <name type="common">Zebrafish</name>
    <name type="synonym">Brachydanio rerio</name>
    <dbReference type="NCBI Taxonomy" id="7955"/>
    <lineage>
        <taxon>Eukaryota</taxon>
        <taxon>Metazoa</taxon>
        <taxon>Chordata</taxon>
        <taxon>Craniata</taxon>
        <taxon>Vertebrata</taxon>
        <taxon>Euteleostomi</taxon>
        <taxon>Actinopterygii</taxon>
        <taxon>Neopterygii</taxon>
        <taxon>Teleostei</taxon>
        <taxon>Ostariophysi</taxon>
        <taxon>Cypriniformes</taxon>
        <taxon>Danionidae</taxon>
        <taxon>Danioninae</taxon>
        <taxon>Danio</taxon>
    </lineage>
</organism>
<protein>
    <recommendedName>
        <fullName>Transmembrane protein 132E</fullName>
    </recommendedName>
</protein>
<sequence>MGHFVVQGDLPWILCSLRLVIMIIAGKVSPTSSDALFSVPVPSATSSPPEVYLPATFKLSNTQLAFFLQENRAPSYGSQRGHPLQRSESFVVFQTKELPAVNISLGPFTQDQTLSKDLLQPSSPLDIPGRLTVNWKVRAFIVQSRVYASNPLVQVLFYIAGRDWDDFKIQDKLPCVRLHAFRDVREIKTSCRLQGNLAQCLAQLDLPSTWFNVNVAPLGRRKSSGTDGLELTGETLQVELYYTLHDPDSNDECGESYPRRGGPSRGESLSQQPLLRIGSISLYQPSQEQLVVDKQLDKNLFLRLPERPLKPGETLNIYLLLVPNSTVEQFTLKVKAKKGVNLLSTKSRSNQWRVEWDMQSGAKHSIATVEASKIKGVSGDMAGSIEIMQLDFEMENFTSQSVTRRINWNIDYRGQNPTSDAEKVVTELTVVQKDIQAIIPLSMDTEIINTAVLTGRTVAIPVKVVSIELNGAVTDVSSSVQCKSFNEDIVKVSMNCDYVFVNGKETRGSMNARVIFSYEHLSAPLELTVWVPKLPLKVELSDNRLSFIKGWRVPILPDRRTARDSDDDDDDDRKVSRGCTLQYQRAQIKVLTQFHTTSSEGTNQMITMLGPDWQVDVTELVQDSLKVVDGRVAELADRTVLVANELGSSTLKVESPLAVEAVLGETQFSVVDEKVSIVELRVHAISGLALNLQPSPGNSHTMVAKATGLQTLSTLKQEASFSIWVYYSDNTAAPLSMYDPKDYNLNGTSADDKVVTVAQQPQQRWPVIIAEGEGTGDIVHVEMTISETCQKTKRKSVIASSSVFVKVRFGTDEDSEEDMEMETEIDTRMPANTRRPAIDSNVGGAGYEPSNEQPASVPIDYTNFPTISNPEEPTEEDEEDDEFVHSPRSMTDLEIGMYALLGVFCLAILVFLINCIVFVLKYRHKRIPPEGQANMDHSHHWVFLGNGEPLRTQSDLSPQTVESPSNTLEGVQTCCHGDHHSSGSSQTSVQSQVHGRGDGSSGGSTKDHGEDASSPTSKRKRVKFTTFTLPTEDLPYNSIPIANEEDIQWVCQDMGFQDQEELHDYMRRIKEIA</sequence>
<accession>L7VG99</accession>
<keyword id="KW-0325">Glycoprotein</keyword>
<keyword id="KW-0472">Membrane</keyword>
<keyword id="KW-1185">Reference proteome</keyword>
<keyword id="KW-0732">Signal</keyword>
<keyword id="KW-0812">Transmembrane</keyword>
<keyword id="KW-1133">Transmembrane helix</keyword>
<gene>
    <name type="primary">tmem132e</name>
</gene>
<proteinExistence type="evidence at transcript level"/>
<name>T132E_DANRE</name>